<gene>
    <name evidence="1" type="primary">mraY</name>
    <name type="ordered locus">PPA0755</name>
</gene>
<evidence type="ECO:0000255" key="1">
    <source>
        <dbReference type="HAMAP-Rule" id="MF_00038"/>
    </source>
</evidence>
<name>MRAY_CUTAK</name>
<sequence>MKNILLAGAVSMIGTLVGTRWFIHWLAAKGYGQFIRDDGPTTHKTKKGTPTMGGAVIIVSVLLAYLVAHLVTWTHPSISALLVLWLFSGLGFIGFLDDWTKISKQRSLGLKPKGKLLGQAFVAITFAIGVMYFPDVHGVTPGSPAISFLRDISWLYLPVWLGIVWVILLIAGSSNAVNLTDGLDGLATGASTMVFGAYTVLSIWQFNQWCSRPTTAGNHCYAVRDPHDIAVVAIAIAGACFGFLWWNAKPAQIFLGDTGSLALGGAVAGMAVVSRTELLLVIIGALFVIETVSVMLQVSVFKITGGKRVFKMAPLHHHFELKGWAEVTVVIRFWIICGLAVSAGLGIFYAEWVAGQ</sequence>
<comment type="function">
    <text evidence="1">Catalyzes the initial step of the lipid cycle reactions in the biosynthesis of the cell wall peptidoglycan: transfers peptidoglycan precursor phospho-MurNAc-pentapeptide from UDP-MurNAc-pentapeptide onto the lipid carrier undecaprenyl phosphate, yielding undecaprenyl-pyrophosphoryl-MurNAc-pentapeptide, known as lipid I.</text>
</comment>
<comment type="catalytic activity">
    <reaction evidence="1">
        <text>UDP-N-acetyl-alpha-D-muramoyl-L-alanyl-gamma-D-glutamyl-meso-2,6-diaminopimeloyl-D-alanyl-D-alanine + di-trans,octa-cis-undecaprenyl phosphate = di-trans,octa-cis-undecaprenyl diphospho-N-acetyl-alpha-D-muramoyl-L-alanyl-D-glutamyl-meso-2,6-diaminopimeloyl-D-alanyl-D-alanine + UMP</text>
        <dbReference type="Rhea" id="RHEA:28386"/>
        <dbReference type="ChEBI" id="CHEBI:57865"/>
        <dbReference type="ChEBI" id="CHEBI:60392"/>
        <dbReference type="ChEBI" id="CHEBI:61386"/>
        <dbReference type="ChEBI" id="CHEBI:61387"/>
        <dbReference type="EC" id="2.7.8.13"/>
    </reaction>
</comment>
<comment type="cofactor">
    <cofactor evidence="1">
        <name>Mg(2+)</name>
        <dbReference type="ChEBI" id="CHEBI:18420"/>
    </cofactor>
</comment>
<comment type="pathway">
    <text evidence="1">Cell wall biogenesis; peptidoglycan biosynthesis.</text>
</comment>
<comment type="subcellular location">
    <subcellularLocation>
        <location evidence="1">Cell membrane</location>
        <topology evidence="1">Multi-pass membrane protein</topology>
    </subcellularLocation>
</comment>
<comment type="similarity">
    <text evidence="1">Belongs to the glycosyltransferase 4 family. MraY subfamily.</text>
</comment>
<proteinExistence type="inferred from homology"/>
<protein>
    <recommendedName>
        <fullName evidence="1">Phospho-N-acetylmuramoyl-pentapeptide-transferase</fullName>
        <ecNumber evidence="1">2.7.8.13</ecNumber>
    </recommendedName>
    <alternativeName>
        <fullName evidence="1">UDP-MurNAc-pentapeptide phosphotransferase</fullName>
    </alternativeName>
</protein>
<dbReference type="EC" id="2.7.8.13" evidence="1"/>
<dbReference type="EMBL" id="AE017283">
    <property type="protein sequence ID" value="AAT82511.1"/>
    <property type="molecule type" value="Genomic_DNA"/>
</dbReference>
<dbReference type="RefSeq" id="WP_002513927.1">
    <property type="nucleotide sequence ID" value="NZ_CP025935.1"/>
</dbReference>
<dbReference type="SMR" id="Q6A9Q5"/>
<dbReference type="EnsemblBacteria" id="AAT82511">
    <property type="protein sequence ID" value="AAT82511"/>
    <property type="gene ID" value="PPA0755"/>
</dbReference>
<dbReference type="GeneID" id="92856741"/>
<dbReference type="KEGG" id="pac:PPA0755"/>
<dbReference type="eggNOG" id="COG0472">
    <property type="taxonomic scope" value="Bacteria"/>
</dbReference>
<dbReference type="HOGENOM" id="CLU_023982_0_1_11"/>
<dbReference type="UniPathway" id="UPA00219"/>
<dbReference type="Proteomes" id="UP000000603">
    <property type="component" value="Chromosome"/>
</dbReference>
<dbReference type="GO" id="GO:0005886">
    <property type="term" value="C:plasma membrane"/>
    <property type="evidence" value="ECO:0007669"/>
    <property type="project" value="UniProtKB-SubCell"/>
</dbReference>
<dbReference type="GO" id="GO:0046872">
    <property type="term" value="F:metal ion binding"/>
    <property type="evidence" value="ECO:0007669"/>
    <property type="project" value="UniProtKB-KW"/>
</dbReference>
<dbReference type="GO" id="GO:0008963">
    <property type="term" value="F:phospho-N-acetylmuramoyl-pentapeptide-transferase activity"/>
    <property type="evidence" value="ECO:0007669"/>
    <property type="project" value="UniProtKB-UniRule"/>
</dbReference>
<dbReference type="GO" id="GO:0051992">
    <property type="term" value="F:UDP-N-acetylmuramoyl-L-alanyl-D-glutamyl-meso-2,6-diaminopimelyl-D-alanyl-D-alanine:undecaprenyl-phosphate transferase activity"/>
    <property type="evidence" value="ECO:0007669"/>
    <property type="project" value="RHEA"/>
</dbReference>
<dbReference type="GO" id="GO:0051301">
    <property type="term" value="P:cell division"/>
    <property type="evidence" value="ECO:0007669"/>
    <property type="project" value="UniProtKB-KW"/>
</dbReference>
<dbReference type="GO" id="GO:0071555">
    <property type="term" value="P:cell wall organization"/>
    <property type="evidence" value="ECO:0007669"/>
    <property type="project" value="UniProtKB-KW"/>
</dbReference>
<dbReference type="GO" id="GO:0009252">
    <property type="term" value="P:peptidoglycan biosynthetic process"/>
    <property type="evidence" value="ECO:0007669"/>
    <property type="project" value="UniProtKB-UniRule"/>
</dbReference>
<dbReference type="GO" id="GO:0008360">
    <property type="term" value="P:regulation of cell shape"/>
    <property type="evidence" value="ECO:0007669"/>
    <property type="project" value="UniProtKB-KW"/>
</dbReference>
<dbReference type="CDD" id="cd06852">
    <property type="entry name" value="GT_MraY"/>
    <property type="match status" value="1"/>
</dbReference>
<dbReference type="HAMAP" id="MF_00038">
    <property type="entry name" value="MraY"/>
    <property type="match status" value="1"/>
</dbReference>
<dbReference type="InterPro" id="IPR000715">
    <property type="entry name" value="Glycosyl_transferase_4"/>
</dbReference>
<dbReference type="InterPro" id="IPR003524">
    <property type="entry name" value="PNAcMuramoyl-5peptid_Trfase"/>
</dbReference>
<dbReference type="InterPro" id="IPR018480">
    <property type="entry name" value="PNAcMuramoyl-5peptid_Trfase_CS"/>
</dbReference>
<dbReference type="NCBIfam" id="TIGR00445">
    <property type="entry name" value="mraY"/>
    <property type="match status" value="1"/>
</dbReference>
<dbReference type="PANTHER" id="PTHR22926">
    <property type="entry name" value="PHOSPHO-N-ACETYLMURAMOYL-PENTAPEPTIDE-TRANSFERASE"/>
    <property type="match status" value="1"/>
</dbReference>
<dbReference type="PANTHER" id="PTHR22926:SF5">
    <property type="entry name" value="PHOSPHO-N-ACETYLMURAMOYL-PENTAPEPTIDE-TRANSFERASE HOMOLOG"/>
    <property type="match status" value="1"/>
</dbReference>
<dbReference type="Pfam" id="PF00953">
    <property type="entry name" value="Glycos_transf_4"/>
    <property type="match status" value="1"/>
</dbReference>
<dbReference type="PROSITE" id="PS01347">
    <property type="entry name" value="MRAY_1"/>
    <property type="match status" value="1"/>
</dbReference>
<dbReference type="PROSITE" id="PS01348">
    <property type="entry name" value="MRAY_2"/>
    <property type="match status" value="1"/>
</dbReference>
<accession>Q6A9Q5</accession>
<feature type="chain" id="PRO_0000108867" description="Phospho-N-acetylmuramoyl-pentapeptide-transferase">
    <location>
        <begin position="1"/>
        <end position="356"/>
    </location>
</feature>
<feature type="transmembrane region" description="Helical" evidence="1">
    <location>
        <begin position="4"/>
        <end position="24"/>
    </location>
</feature>
<feature type="transmembrane region" description="Helical" evidence="1">
    <location>
        <begin position="53"/>
        <end position="73"/>
    </location>
</feature>
<feature type="transmembrane region" description="Helical" evidence="1">
    <location>
        <begin position="76"/>
        <end position="96"/>
    </location>
</feature>
<feature type="transmembrane region" description="Helical" evidence="1">
    <location>
        <begin position="116"/>
        <end position="136"/>
    </location>
</feature>
<feature type="transmembrane region" description="Helical" evidence="1">
    <location>
        <begin position="152"/>
        <end position="172"/>
    </location>
</feature>
<feature type="transmembrane region" description="Helical" evidence="1">
    <location>
        <begin position="186"/>
        <end position="206"/>
    </location>
</feature>
<feature type="transmembrane region" description="Helical" evidence="1">
    <location>
        <begin position="228"/>
        <end position="248"/>
    </location>
</feature>
<feature type="transmembrane region" description="Helical" evidence="1">
    <location>
        <begin position="253"/>
        <end position="273"/>
    </location>
</feature>
<feature type="transmembrane region" description="Helical" evidence="1">
    <location>
        <begin position="278"/>
        <end position="298"/>
    </location>
</feature>
<feature type="transmembrane region" description="Helical" evidence="1">
    <location>
        <begin position="333"/>
        <end position="353"/>
    </location>
</feature>
<organism>
    <name type="scientific">Cutibacterium acnes (strain DSM 16379 / KPA171202)</name>
    <name type="common">Propionibacterium acnes</name>
    <dbReference type="NCBI Taxonomy" id="267747"/>
    <lineage>
        <taxon>Bacteria</taxon>
        <taxon>Bacillati</taxon>
        <taxon>Actinomycetota</taxon>
        <taxon>Actinomycetes</taxon>
        <taxon>Propionibacteriales</taxon>
        <taxon>Propionibacteriaceae</taxon>
        <taxon>Cutibacterium</taxon>
    </lineage>
</organism>
<reference key="1">
    <citation type="journal article" date="2004" name="Science">
        <title>The complete genome sequence of Propionibacterium acnes, a commensal of human skin.</title>
        <authorList>
            <person name="Brueggemann H."/>
            <person name="Henne A."/>
            <person name="Hoster F."/>
            <person name="Liesegang H."/>
            <person name="Wiezer A."/>
            <person name="Strittmatter A."/>
            <person name="Hujer S."/>
            <person name="Duerre P."/>
            <person name="Gottschalk G."/>
        </authorList>
    </citation>
    <scope>NUCLEOTIDE SEQUENCE [LARGE SCALE GENOMIC DNA]</scope>
    <source>
        <strain>DSM 16379 / KPA171202</strain>
    </source>
</reference>
<keyword id="KW-0131">Cell cycle</keyword>
<keyword id="KW-0132">Cell division</keyword>
<keyword id="KW-1003">Cell membrane</keyword>
<keyword id="KW-0133">Cell shape</keyword>
<keyword id="KW-0961">Cell wall biogenesis/degradation</keyword>
<keyword id="KW-0460">Magnesium</keyword>
<keyword id="KW-0472">Membrane</keyword>
<keyword id="KW-0479">Metal-binding</keyword>
<keyword id="KW-0573">Peptidoglycan synthesis</keyword>
<keyword id="KW-0808">Transferase</keyword>
<keyword id="KW-0812">Transmembrane</keyword>
<keyword id="KW-1133">Transmembrane helix</keyword>